<dbReference type="EMBL" id="AE000516">
    <property type="protein sequence ID" value="AAK44893.1"/>
    <property type="molecule type" value="Genomic_DNA"/>
</dbReference>
<dbReference type="PIR" id="D70613">
    <property type="entry name" value="D70613"/>
</dbReference>
<dbReference type="RefSeq" id="WP_003403288.1">
    <property type="nucleotide sequence ID" value="NZ_KK341227.1"/>
</dbReference>
<dbReference type="BMRB" id="P9WIU8"/>
<dbReference type="SMR" id="P9WIU8"/>
<dbReference type="GeneID" id="45424599"/>
<dbReference type="KEGG" id="mtc:MT0668"/>
<dbReference type="PATRIC" id="fig|83331.31.peg.710"/>
<dbReference type="HOGENOM" id="CLU_067287_0_2_11"/>
<dbReference type="Proteomes" id="UP000001020">
    <property type="component" value="Chromosome"/>
</dbReference>
<dbReference type="GO" id="GO:0005829">
    <property type="term" value="C:cytosol"/>
    <property type="evidence" value="ECO:0007669"/>
    <property type="project" value="TreeGrafter"/>
</dbReference>
<dbReference type="GO" id="GO:0006353">
    <property type="term" value="P:DNA-templated transcription termination"/>
    <property type="evidence" value="ECO:0007669"/>
    <property type="project" value="UniProtKB-UniRule"/>
</dbReference>
<dbReference type="GO" id="GO:0032784">
    <property type="term" value="P:regulation of DNA-templated transcription elongation"/>
    <property type="evidence" value="ECO:0007669"/>
    <property type="project" value="InterPro"/>
</dbReference>
<dbReference type="GO" id="GO:0031564">
    <property type="term" value="P:transcription antitermination"/>
    <property type="evidence" value="ECO:0007669"/>
    <property type="project" value="UniProtKB-UniRule"/>
</dbReference>
<dbReference type="GO" id="GO:0140673">
    <property type="term" value="P:transcription elongation-coupled chromatin remodeling"/>
    <property type="evidence" value="ECO:0007669"/>
    <property type="project" value="InterPro"/>
</dbReference>
<dbReference type="CDD" id="cd06091">
    <property type="entry name" value="KOW_NusG"/>
    <property type="match status" value="1"/>
</dbReference>
<dbReference type="CDD" id="cd09891">
    <property type="entry name" value="NGN_Bact_1"/>
    <property type="match status" value="1"/>
</dbReference>
<dbReference type="FunFam" id="2.30.30.30:FF:000002">
    <property type="entry name" value="Transcription termination/antitermination factor NusG"/>
    <property type="match status" value="1"/>
</dbReference>
<dbReference type="FunFam" id="3.30.70.940:FF:000002">
    <property type="entry name" value="Transcription termination/antitermination protein NusG"/>
    <property type="match status" value="1"/>
</dbReference>
<dbReference type="Gene3D" id="2.30.30.30">
    <property type="match status" value="1"/>
</dbReference>
<dbReference type="Gene3D" id="3.30.70.940">
    <property type="entry name" value="NusG, N-terminal domain"/>
    <property type="match status" value="1"/>
</dbReference>
<dbReference type="HAMAP" id="MF_00948">
    <property type="entry name" value="NusG"/>
    <property type="match status" value="1"/>
</dbReference>
<dbReference type="InterPro" id="IPR047050">
    <property type="entry name" value="NGN"/>
</dbReference>
<dbReference type="InterPro" id="IPR006645">
    <property type="entry name" value="NGN-like_dom"/>
</dbReference>
<dbReference type="InterPro" id="IPR036735">
    <property type="entry name" value="NGN_dom_sf"/>
</dbReference>
<dbReference type="InterPro" id="IPR043425">
    <property type="entry name" value="NusG-like"/>
</dbReference>
<dbReference type="InterPro" id="IPR014722">
    <property type="entry name" value="Rib_uL2_dom2"/>
</dbReference>
<dbReference type="InterPro" id="IPR001062">
    <property type="entry name" value="Transcrpt_antiterm_NusG"/>
</dbReference>
<dbReference type="InterPro" id="IPR015869">
    <property type="entry name" value="Transcrpt_antiterm_NusG_bac_CS"/>
</dbReference>
<dbReference type="InterPro" id="IPR008991">
    <property type="entry name" value="Translation_prot_SH3-like_sf"/>
</dbReference>
<dbReference type="NCBIfam" id="TIGR00922">
    <property type="entry name" value="nusG"/>
    <property type="match status" value="1"/>
</dbReference>
<dbReference type="PANTHER" id="PTHR30265">
    <property type="entry name" value="RHO-INTERACTING TRANSCRIPTION TERMINATION FACTOR NUSG"/>
    <property type="match status" value="1"/>
</dbReference>
<dbReference type="PANTHER" id="PTHR30265:SF2">
    <property type="entry name" value="TRANSCRIPTION TERMINATION_ANTITERMINATION PROTEIN NUSG"/>
    <property type="match status" value="1"/>
</dbReference>
<dbReference type="Pfam" id="PF02357">
    <property type="entry name" value="NusG"/>
    <property type="match status" value="1"/>
</dbReference>
<dbReference type="PRINTS" id="PR00338">
    <property type="entry name" value="NUSGTNSCPFCT"/>
</dbReference>
<dbReference type="SMART" id="SM00738">
    <property type="entry name" value="NGN"/>
    <property type="match status" value="1"/>
</dbReference>
<dbReference type="SUPFAM" id="SSF82679">
    <property type="entry name" value="N-utilization substance G protein NusG, N-terminal domain"/>
    <property type="match status" value="1"/>
</dbReference>
<dbReference type="SUPFAM" id="SSF50104">
    <property type="entry name" value="Translation proteins SH3-like domain"/>
    <property type="match status" value="1"/>
</dbReference>
<dbReference type="PROSITE" id="PS01014">
    <property type="entry name" value="NUSG"/>
    <property type="match status" value="1"/>
</dbReference>
<keyword id="KW-1185">Reference proteome</keyword>
<keyword id="KW-0804">Transcription</keyword>
<keyword id="KW-0889">Transcription antitermination</keyword>
<keyword id="KW-0805">Transcription regulation</keyword>
<keyword id="KW-0806">Transcription termination</keyword>
<accession>P9WIU8</accession>
<accession>L0T7B3</accession>
<accession>P65589</accession>
<accession>P96930</accession>
<gene>
    <name evidence="1" type="primary">nusG</name>
    <name type="ordered locus">MT0668</name>
</gene>
<comment type="function">
    <text evidence="1">Participates in transcription elongation, termination and antitermination.</text>
</comment>
<comment type="similarity">
    <text evidence="1">Belongs to the NusG family.</text>
</comment>
<organism>
    <name type="scientific">Mycobacterium tuberculosis (strain CDC 1551 / Oshkosh)</name>
    <dbReference type="NCBI Taxonomy" id="83331"/>
    <lineage>
        <taxon>Bacteria</taxon>
        <taxon>Bacillati</taxon>
        <taxon>Actinomycetota</taxon>
        <taxon>Actinomycetes</taxon>
        <taxon>Mycobacteriales</taxon>
        <taxon>Mycobacteriaceae</taxon>
        <taxon>Mycobacterium</taxon>
        <taxon>Mycobacterium tuberculosis complex</taxon>
    </lineage>
</organism>
<feature type="chain" id="PRO_0000427942" description="Transcription termination/antitermination protein NusG">
    <location>
        <begin position="1"/>
        <end position="238"/>
    </location>
</feature>
<proteinExistence type="inferred from homology"/>
<reference key="1">
    <citation type="journal article" date="2002" name="J. Bacteriol.">
        <title>Whole-genome comparison of Mycobacterium tuberculosis clinical and laboratory strains.</title>
        <authorList>
            <person name="Fleischmann R.D."/>
            <person name="Alland D."/>
            <person name="Eisen J.A."/>
            <person name="Carpenter L."/>
            <person name="White O."/>
            <person name="Peterson J.D."/>
            <person name="DeBoy R.T."/>
            <person name="Dodson R.J."/>
            <person name="Gwinn M.L."/>
            <person name="Haft D.H."/>
            <person name="Hickey E.K."/>
            <person name="Kolonay J.F."/>
            <person name="Nelson W.C."/>
            <person name="Umayam L.A."/>
            <person name="Ermolaeva M.D."/>
            <person name="Salzberg S.L."/>
            <person name="Delcher A."/>
            <person name="Utterback T.R."/>
            <person name="Weidman J.F."/>
            <person name="Khouri H.M."/>
            <person name="Gill J."/>
            <person name="Mikula A."/>
            <person name="Bishai W."/>
            <person name="Jacobs W.R. Jr."/>
            <person name="Venter J.C."/>
            <person name="Fraser C.M."/>
        </authorList>
    </citation>
    <scope>NUCLEOTIDE SEQUENCE [LARGE SCALE GENOMIC DNA]</scope>
    <source>
        <strain>CDC 1551 / Oshkosh</strain>
    </source>
</reference>
<sequence>MTTFDGDTSAGEAVDLTEANAFQDAAAPAEEVDPAAALKAELRSKPGDWYVVHSYAGYENKVKANLETRVQNLDVGDYIFQVEVPTEEVTEIKNGQRKQVNRKVLPGYILVRMDLTDDSWAAVRNTPGVTGFVGATSRPSALALDDVVKFLLPRGSTRKAAKGAASTAAAAEAGGLERPVVEVDYEVGESVTVMDGPFATLPATISEVNAEQQKLKVLVSIFGRETPVELTFGQVSKI</sequence>
<name>NUSG_MYCTO</name>
<protein>
    <recommendedName>
        <fullName evidence="1">Transcription termination/antitermination protein NusG</fullName>
    </recommendedName>
</protein>
<evidence type="ECO:0000255" key="1">
    <source>
        <dbReference type="HAMAP-Rule" id="MF_00948"/>
    </source>
</evidence>